<accession>B1XBC1</accession>
<evidence type="ECO:0000255" key="1">
    <source>
        <dbReference type="HAMAP-Rule" id="MF_00595"/>
    </source>
</evidence>
<dbReference type="EC" id="4.1.1.31" evidence="1"/>
<dbReference type="EMBL" id="CP000948">
    <property type="protein sequence ID" value="ACB04967.1"/>
    <property type="molecule type" value="Genomic_DNA"/>
</dbReference>
<dbReference type="RefSeq" id="WP_001005586.1">
    <property type="nucleotide sequence ID" value="NC_010473.1"/>
</dbReference>
<dbReference type="SMR" id="B1XBC1"/>
<dbReference type="KEGG" id="ecd:ECDH10B_4144"/>
<dbReference type="HOGENOM" id="CLU_006557_2_0_6"/>
<dbReference type="BRENDA" id="4.1.1.31">
    <property type="organism ID" value="2026"/>
</dbReference>
<dbReference type="GO" id="GO:0005829">
    <property type="term" value="C:cytosol"/>
    <property type="evidence" value="ECO:0007669"/>
    <property type="project" value="TreeGrafter"/>
</dbReference>
<dbReference type="GO" id="GO:0000287">
    <property type="term" value="F:magnesium ion binding"/>
    <property type="evidence" value="ECO:0007669"/>
    <property type="project" value="UniProtKB-UniRule"/>
</dbReference>
<dbReference type="GO" id="GO:0008964">
    <property type="term" value="F:phosphoenolpyruvate carboxylase activity"/>
    <property type="evidence" value="ECO:0007669"/>
    <property type="project" value="UniProtKB-UniRule"/>
</dbReference>
<dbReference type="GO" id="GO:0015977">
    <property type="term" value="P:carbon fixation"/>
    <property type="evidence" value="ECO:0007669"/>
    <property type="project" value="UniProtKB-UniRule"/>
</dbReference>
<dbReference type="GO" id="GO:0006107">
    <property type="term" value="P:oxaloacetate metabolic process"/>
    <property type="evidence" value="ECO:0007669"/>
    <property type="project" value="UniProtKB-UniRule"/>
</dbReference>
<dbReference type="GO" id="GO:0006099">
    <property type="term" value="P:tricarboxylic acid cycle"/>
    <property type="evidence" value="ECO:0007669"/>
    <property type="project" value="InterPro"/>
</dbReference>
<dbReference type="FunFam" id="1.20.1440.90:FF:000002">
    <property type="entry name" value="Phosphoenolpyruvate carboxylase"/>
    <property type="match status" value="1"/>
</dbReference>
<dbReference type="Gene3D" id="1.20.1440.90">
    <property type="entry name" value="Phosphoenolpyruvate/pyruvate domain"/>
    <property type="match status" value="1"/>
</dbReference>
<dbReference type="HAMAP" id="MF_00595">
    <property type="entry name" value="PEPcase_type1"/>
    <property type="match status" value="1"/>
</dbReference>
<dbReference type="InterPro" id="IPR021135">
    <property type="entry name" value="PEP_COase"/>
</dbReference>
<dbReference type="InterPro" id="IPR022805">
    <property type="entry name" value="PEP_COase_bac/pln-type"/>
</dbReference>
<dbReference type="InterPro" id="IPR018129">
    <property type="entry name" value="PEP_COase_Lys_AS"/>
</dbReference>
<dbReference type="InterPro" id="IPR033129">
    <property type="entry name" value="PEPCASE_His_AS"/>
</dbReference>
<dbReference type="InterPro" id="IPR015813">
    <property type="entry name" value="Pyrv/PenolPyrv_kinase-like_dom"/>
</dbReference>
<dbReference type="NCBIfam" id="NF000584">
    <property type="entry name" value="PRK00009.1"/>
    <property type="match status" value="1"/>
</dbReference>
<dbReference type="PANTHER" id="PTHR30523">
    <property type="entry name" value="PHOSPHOENOLPYRUVATE CARBOXYLASE"/>
    <property type="match status" value="1"/>
</dbReference>
<dbReference type="PANTHER" id="PTHR30523:SF6">
    <property type="entry name" value="PHOSPHOENOLPYRUVATE CARBOXYLASE"/>
    <property type="match status" value="1"/>
</dbReference>
<dbReference type="Pfam" id="PF00311">
    <property type="entry name" value="PEPcase"/>
    <property type="match status" value="1"/>
</dbReference>
<dbReference type="PRINTS" id="PR00150">
    <property type="entry name" value="PEPCARBXLASE"/>
</dbReference>
<dbReference type="SUPFAM" id="SSF51621">
    <property type="entry name" value="Phosphoenolpyruvate/pyruvate domain"/>
    <property type="match status" value="1"/>
</dbReference>
<dbReference type="PROSITE" id="PS00781">
    <property type="entry name" value="PEPCASE_1"/>
    <property type="match status" value="1"/>
</dbReference>
<dbReference type="PROSITE" id="PS00393">
    <property type="entry name" value="PEPCASE_2"/>
    <property type="match status" value="1"/>
</dbReference>
<keyword id="KW-0120">Carbon dioxide fixation</keyword>
<keyword id="KW-0456">Lyase</keyword>
<keyword id="KW-0460">Magnesium</keyword>
<sequence length="883" mass="99063">MNEQYSALRSNVSMLGKVLGETIKDALGEHILERVETIRKLSKSSRAGNDANRQELLTTLQNLSNDELLPVARAFSQFLNLANTAEQYHSISPKGEAASNPEVIARTLRKLKNQPELSEDTIKKAVESLSLELVLTAHPTEITRRTLIHKMVEVNACLKQLDNKDIADYEHNQLMRRLRQLIAQSWHTDEIRKLRPSPVDEAKWGFAVVENSLWQGVPNYLRELNEQLEENLGYKLPVEFVPVRFTSWMGGDRDGNPNVTADITRHVLLLSRWKATDLFLKDIQVLVSELSMVEATPELLALVGEEGAAEPYRYLMKNLRSRLMATQAWLEARLKGEELPKPEGLLTQNEELWEPLYACYQSLQACGMGIIANGDLLDTLRRVKCFGVPLVRIDIRQESTRHTEALGELTRYLGIGDYESWSEADKQAFLIRELNSKRPLLPRNWQPSAETREVLDTCQVIAEAPQGSIAAYVISMAKTPSDVLAVHLLLKEAGIGFAMPVAPLFETLDDLNNANDVMTQLLNIDWYRGLIQGKQMVMIGYSDSAKDAGVMAASWAQYQAQDALIKTCEKAGIELTLFHGRGGSIGRGGAPAHAALLSQPPGSLKGGLRVTEQGEMIRFKYGLPEITVSSLSLYTGAILEANLLPPPEPKESWRRIMDELSVISCDVYRGYVRENKDFVPYFRSATPEQELGKLPLGSRPAKRRPTGGVESLRAIPWIFAWTQNRLMLPAWLGAGTALQKVVEDGKQSELEAMCRDWPFFSTRLGMLEMVFAKADLWLAEYYDQRLVDKALWPLGKELRNLQEEDIKVVLAIANDSHLMADLPWIAESIQLRNIYTDPLNVLQAELLHRSRQAEKEGQEPDPRVEQALMVTIAGIAAGMRNTG</sequence>
<protein>
    <recommendedName>
        <fullName evidence="1">Phosphoenolpyruvate carboxylase</fullName>
        <shortName evidence="1">PEPC</shortName>
        <shortName evidence="1">PEPCase</shortName>
        <ecNumber evidence="1">4.1.1.31</ecNumber>
    </recommendedName>
</protein>
<proteinExistence type="inferred from homology"/>
<gene>
    <name evidence="1" type="primary">ppc</name>
    <name type="ordered locus">ECDH10B_4144</name>
</gene>
<comment type="function">
    <text evidence="1">Forms oxaloacetate, a four-carbon dicarboxylic acid source for the tricarboxylic acid cycle.</text>
</comment>
<comment type="catalytic activity">
    <reaction evidence="1">
        <text>oxaloacetate + phosphate = phosphoenolpyruvate + hydrogencarbonate</text>
        <dbReference type="Rhea" id="RHEA:28370"/>
        <dbReference type="ChEBI" id="CHEBI:16452"/>
        <dbReference type="ChEBI" id="CHEBI:17544"/>
        <dbReference type="ChEBI" id="CHEBI:43474"/>
        <dbReference type="ChEBI" id="CHEBI:58702"/>
        <dbReference type="EC" id="4.1.1.31"/>
    </reaction>
</comment>
<comment type="cofactor">
    <cofactor evidence="1">
        <name>Mg(2+)</name>
        <dbReference type="ChEBI" id="CHEBI:18420"/>
    </cofactor>
</comment>
<comment type="similarity">
    <text evidence="1">Belongs to the PEPCase type 1 family.</text>
</comment>
<organism>
    <name type="scientific">Escherichia coli (strain K12 / DH10B)</name>
    <dbReference type="NCBI Taxonomy" id="316385"/>
    <lineage>
        <taxon>Bacteria</taxon>
        <taxon>Pseudomonadati</taxon>
        <taxon>Pseudomonadota</taxon>
        <taxon>Gammaproteobacteria</taxon>
        <taxon>Enterobacterales</taxon>
        <taxon>Enterobacteriaceae</taxon>
        <taxon>Escherichia</taxon>
    </lineage>
</organism>
<feature type="chain" id="PRO_1000129829" description="Phosphoenolpyruvate carboxylase">
    <location>
        <begin position="1"/>
        <end position="883"/>
    </location>
</feature>
<feature type="active site" evidence="1">
    <location>
        <position position="138"/>
    </location>
</feature>
<feature type="active site" evidence="1">
    <location>
        <position position="546"/>
    </location>
</feature>
<reference key="1">
    <citation type="journal article" date="2008" name="J. Bacteriol.">
        <title>The complete genome sequence of Escherichia coli DH10B: insights into the biology of a laboratory workhorse.</title>
        <authorList>
            <person name="Durfee T."/>
            <person name="Nelson R."/>
            <person name="Baldwin S."/>
            <person name="Plunkett G. III"/>
            <person name="Burland V."/>
            <person name="Mau B."/>
            <person name="Petrosino J.F."/>
            <person name="Qin X."/>
            <person name="Muzny D.M."/>
            <person name="Ayele M."/>
            <person name="Gibbs R.A."/>
            <person name="Csorgo B."/>
            <person name="Posfai G."/>
            <person name="Weinstock G.M."/>
            <person name="Blattner F.R."/>
        </authorList>
    </citation>
    <scope>NUCLEOTIDE SEQUENCE [LARGE SCALE GENOMIC DNA]</scope>
    <source>
        <strain>K12 / DH10B</strain>
    </source>
</reference>
<name>CAPP_ECODH</name>